<comment type="function">
    <text evidence="1">Key component of the proton channel; it plays a direct role in the translocation of protons across the membrane.</text>
</comment>
<comment type="subunit">
    <text evidence="1">F-type ATPases have 2 components, CF(1) - the catalytic core - and CF(0) - the membrane proton channel. CF(1) has five subunits: alpha(3), beta(3), gamma(1), delta(1), epsilon(1). CF(0) has four main subunits: a, b, b' and c.</text>
</comment>
<comment type="subcellular location">
    <subcellularLocation>
        <location evidence="1">Plastid</location>
        <location evidence="1">Chloroplast thylakoid membrane</location>
        <topology evidence="1">Multi-pass membrane protein</topology>
    </subcellularLocation>
</comment>
<comment type="similarity">
    <text evidence="1">Belongs to the ATPase A chain family.</text>
</comment>
<name>ATPI_CITSI</name>
<gene>
    <name evidence="1" type="primary">atpI</name>
</gene>
<accession>Q09MJ0</accession>
<geneLocation type="chloroplast"/>
<keyword id="KW-0066">ATP synthesis</keyword>
<keyword id="KW-0138">CF(0)</keyword>
<keyword id="KW-0150">Chloroplast</keyword>
<keyword id="KW-0375">Hydrogen ion transport</keyword>
<keyword id="KW-0406">Ion transport</keyword>
<keyword id="KW-0472">Membrane</keyword>
<keyword id="KW-0934">Plastid</keyword>
<keyword id="KW-0793">Thylakoid</keyword>
<keyword id="KW-0812">Transmembrane</keyword>
<keyword id="KW-1133">Transmembrane helix</keyword>
<keyword id="KW-0813">Transport</keyword>
<dbReference type="EMBL" id="DQ864733">
    <property type="protein sequence ID" value="ABI49008.1"/>
    <property type="molecule type" value="Genomic_DNA"/>
</dbReference>
<dbReference type="RefSeq" id="YP_740463.1">
    <property type="nucleotide sequence ID" value="NC_008334.1"/>
</dbReference>
<dbReference type="SMR" id="Q09MJ0"/>
<dbReference type="GeneID" id="4271231"/>
<dbReference type="KEGG" id="cit:4271231"/>
<dbReference type="OrthoDB" id="157137at71240"/>
<dbReference type="GO" id="GO:0009535">
    <property type="term" value="C:chloroplast thylakoid membrane"/>
    <property type="evidence" value="ECO:0007669"/>
    <property type="project" value="UniProtKB-SubCell"/>
</dbReference>
<dbReference type="GO" id="GO:0005886">
    <property type="term" value="C:plasma membrane"/>
    <property type="evidence" value="ECO:0007669"/>
    <property type="project" value="UniProtKB-UniRule"/>
</dbReference>
<dbReference type="GO" id="GO:0045259">
    <property type="term" value="C:proton-transporting ATP synthase complex"/>
    <property type="evidence" value="ECO:0007669"/>
    <property type="project" value="UniProtKB-KW"/>
</dbReference>
<dbReference type="GO" id="GO:0046933">
    <property type="term" value="F:proton-transporting ATP synthase activity, rotational mechanism"/>
    <property type="evidence" value="ECO:0007669"/>
    <property type="project" value="UniProtKB-UniRule"/>
</dbReference>
<dbReference type="CDD" id="cd00310">
    <property type="entry name" value="ATP-synt_Fo_a_6"/>
    <property type="match status" value="1"/>
</dbReference>
<dbReference type="FunFam" id="1.20.120.220:FF:000001">
    <property type="entry name" value="ATP synthase subunit a, chloroplastic"/>
    <property type="match status" value="1"/>
</dbReference>
<dbReference type="Gene3D" id="1.20.120.220">
    <property type="entry name" value="ATP synthase, F0 complex, subunit A"/>
    <property type="match status" value="1"/>
</dbReference>
<dbReference type="HAMAP" id="MF_01393">
    <property type="entry name" value="ATP_synth_a_bact"/>
    <property type="match status" value="1"/>
</dbReference>
<dbReference type="InterPro" id="IPR045082">
    <property type="entry name" value="ATP_syn_F0_a_bact/chloroplast"/>
</dbReference>
<dbReference type="InterPro" id="IPR000568">
    <property type="entry name" value="ATP_synth_F0_asu"/>
</dbReference>
<dbReference type="InterPro" id="IPR023011">
    <property type="entry name" value="ATP_synth_F0_asu_AS"/>
</dbReference>
<dbReference type="InterPro" id="IPR035908">
    <property type="entry name" value="F0_ATP_A_sf"/>
</dbReference>
<dbReference type="NCBIfam" id="TIGR01131">
    <property type="entry name" value="ATP_synt_6_or_A"/>
    <property type="match status" value="1"/>
</dbReference>
<dbReference type="PANTHER" id="PTHR42823">
    <property type="entry name" value="ATP SYNTHASE SUBUNIT A, CHLOROPLASTIC"/>
    <property type="match status" value="1"/>
</dbReference>
<dbReference type="PANTHER" id="PTHR42823:SF3">
    <property type="entry name" value="ATP SYNTHASE SUBUNIT A, CHLOROPLASTIC"/>
    <property type="match status" value="1"/>
</dbReference>
<dbReference type="Pfam" id="PF00119">
    <property type="entry name" value="ATP-synt_A"/>
    <property type="match status" value="1"/>
</dbReference>
<dbReference type="PRINTS" id="PR00123">
    <property type="entry name" value="ATPASEA"/>
</dbReference>
<dbReference type="SUPFAM" id="SSF81336">
    <property type="entry name" value="F1F0 ATP synthase subunit A"/>
    <property type="match status" value="1"/>
</dbReference>
<dbReference type="PROSITE" id="PS00449">
    <property type="entry name" value="ATPASE_A"/>
    <property type="match status" value="1"/>
</dbReference>
<feature type="chain" id="PRO_0000362543" description="ATP synthase subunit a, chloroplastic">
    <location>
        <begin position="1"/>
        <end position="247"/>
    </location>
</feature>
<feature type="transmembrane region" description="Helical" evidence="1">
    <location>
        <begin position="38"/>
        <end position="58"/>
    </location>
</feature>
<feature type="transmembrane region" description="Helical" evidence="1">
    <location>
        <begin position="95"/>
        <end position="115"/>
    </location>
</feature>
<feature type="transmembrane region" description="Helical" evidence="1">
    <location>
        <begin position="134"/>
        <end position="154"/>
    </location>
</feature>
<feature type="transmembrane region" description="Helical" evidence="1">
    <location>
        <begin position="199"/>
        <end position="219"/>
    </location>
</feature>
<feature type="transmembrane region" description="Helical" evidence="1">
    <location>
        <begin position="220"/>
        <end position="240"/>
    </location>
</feature>
<organism>
    <name type="scientific">Citrus sinensis</name>
    <name type="common">Sweet orange</name>
    <name type="synonym">Citrus aurantium var. sinensis</name>
    <dbReference type="NCBI Taxonomy" id="2711"/>
    <lineage>
        <taxon>Eukaryota</taxon>
        <taxon>Viridiplantae</taxon>
        <taxon>Streptophyta</taxon>
        <taxon>Embryophyta</taxon>
        <taxon>Tracheophyta</taxon>
        <taxon>Spermatophyta</taxon>
        <taxon>Magnoliopsida</taxon>
        <taxon>eudicotyledons</taxon>
        <taxon>Gunneridae</taxon>
        <taxon>Pentapetalae</taxon>
        <taxon>rosids</taxon>
        <taxon>malvids</taxon>
        <taxon>Sapindales</taxon>
        <taxon>Rutaceae</taxon>
        <taxon>Aurantioideae</taxon>
        <taxon>Citrus</taxon>
    </lineage>
</organism>
<evidence type="ECO:0000255" key="1">
    <source>
        <dbReference type="HAMAP-Rule" id="MF_01393"/>
    </source>
</evidence>
<proteinExistence type="inferred from homology"/>
<sequence>MNVLSCSMNTLRGLYDISGVEVGQHFYWQIGGFQVHAQVLITSWVVIAILLGSAFIAVRNPQTVPTATQNFFEYVLEFIRDVSKTQIGEEYGPWVPFIGTLFLFIFVSNWSGALLPWKIIELPHGELAAPTNDINTTVALALLTSIAYFYAGLSKKGLGYFSKYIQPTPILLPINILEDFTKPLSLSFRLFGNILADELVVVVLVSLVPLVVPIPVMFLGLFTSGIQALIFATLAAAYIGESMEGHH</sequence>
<reference key="1">
    <citation type="journal article" date="2006" name="BMC Plant Biol.">
        <title>The complete chloroplast genome sequence of Citrus sinensis (L.) Osbeck var 'Ridge Pineapple': organization and phylogenetic relationships to other angiosperms.</title>
        <authorList>
            <person name="Bausher M.G."/>
            <person name="Singh N.D."/>
            <person name="Lee S.-B."/>
            <person name="Jansen R.K."/>
            <person name="Daniell H."/>
        </authorList>
    </citation>
    <scope>NUCLEOTIDE SEQUENCE [LARGE SCALE GENOMIC DNA]</scope>
    <source>
        <strain>cv. Osbeck var. Ridge Pineapple</strain>
    </source>
</reference>
<protein>
    <recommendedName>
        <fullName evidence="1">ATP synthase subunit a, chloroplastic</fullName>
    </recommendedName>
    <alternativeName>
        <fullName evidence="1">ATP synthase F0 sector subunit a</fullName>
    </alternativeName>
    <alternativeName>
        <fullName evidence="1">F-ATPase subunit IV</fullName>
    </alternativeName>
</protein>